<keyword id="KW-1185">Reference proteome</keyword>
<organism>
    <name type="scientific">Homo sapiens</name>
    <name type="common">Human</name>
    <dbReference type="NCBI Taxonomy" id="9606"/>
    <lineage>
        <taxon>Eukaryota</taxon>
        <taxon>Metazoa</taxon>
        <taxon>Chordata</taxon>
        <taxon>Craniata</taxon>
        <taxon>Vertebrata</taxon>
        <taxon>Euteleostomi</taxon>
        <taxon>Mammalia</taxon>
        <taxon>Eutheria</taxon>
        <taxon>Euarchontoglires</taxon>
        <taxon>Primates</taxon>
        <taxon>Haplorrhini</taxon>
        <taxon>Catarrhini</taxon>
        <taxon>Hominidae</taxon>
        <taxon>Homo</taxon>
    </lineage>
</organism>
<protein>
    <recommendedName>
        <fullName evidence="2">Speedy protein E10</fullName>
    </recommendedName>
</protein>
<gene>
    <name evidence="3" type="primary">SPDYE10</name>
    <name evidence="3" type="synonym">SPDYE10P</name>
</gene>
<evidence type="ECO:0000256" key="1">
    <source>
        <dbReference type="SAM" id="MobiDB-lite"/>
    </source>
</evidence>
<evidence type="ECO:0000305" key="2"/>
<evidence type="ECO:0000312" key="3">
    <source>
        <dbReference type="HGNC" id="HGNC:51506"/>
    </source>
</evidence>
<name>SPD10_HUMAN</name>
<reference key="1">
    <citation type="journal article" date="2003" name="Nature">
        <title>The DNA sequence of human chromosome 7.</title>
        <authorList>
            <person name="Hillier L.W."/>
            <person name="Fulton R.S."/>
            <person name="Fulton L.A."/>
            <person name="Graves T.A."/>
            <person name="Pepin K.H."/>
            <person name="Wagner-McPherson C."/>
            <person name="Layman D."/>
            <person name="Maas J."/>
            <person name="Jaeger S."/>
            <person name="Walker R."/>
            <person name="Wylie K."/>
            <person name="Sekhon M."/>
            <person name="Becker M.C."/>
            <person name="O'Laughlin M.D."/>
            <person name="Schaller M.E."/>
            <person name="Fewell G.A."/>
            <person name="Delehaunty K.D."/>
            <person name="Miner T.L."/>
            <person name="Nash W.E."/>
            <person name="Cordes M."/>
            <person name="Du H."/>
            <person name="Sun H."/>
            <person name="Edwards J."/>
            <person name="Bradshaw-Cordum H."/>
            <person name="Ali J."/>
            <person name="Andrews S."/>
            <person name="Isak A."/>
            <person name="Vanbrunt A."/>
            <person name="Nguyen C."/>
            <person name="Du F."/>
            <person name="Lamar B."/>
            <person name="Courtney L."/>
            <person name="Kalicki J."/>
            <person name="Ozersky P."/>
            <person name="Bielicki L."/>
            <person name="Scott K."/>
            <person name="Holmes A."/>
            <person name="Harkins R."/>
            <person name="Harris A."/>
            <person name="Strong C.M."/>
            <person name="Hou S."/>
            <person name="Tomlinson C."/>
            <person name="Dauphin-Kohlberg S."/>
            <person name="Kozlowicz-Reilly A."/>
            <person name="Leonard S."/>
            <person name="Rohlfing T."/>
            <person name="Rock S.M."/>
            <person name="Tin-Wollam A.-M."/>
            <person name="Abbott A."/>
            <person name="Minx P."/>
            <person name="Maupin R."/>
            <person name="Strowmatt C."/>
            <person name="Latreille P."/>
            <person name="Miller N."/>
            <person name="Johnson D."/>
            <person name="Murray J."/>
            <person name="Woessner J.P."/>
            <person name="Wendl M.C."/>
            <person name="Yang S.-P."/>
            <person name="Schultz B.R."/>
            <person name="Wallis J.W."/>
            <person name="Spieth J."/>
            <person name="Bieri T.A."/>
            <person name="Nelson J.O."/>
            <person name="Berkowicz N."/>
            <person name="Wohldmann P.E."/>
            <person name="Cook L.L."/>
            <person name="Hickenbotham M.T."/>
            <person name="Eldred J."/>
            <person name="Williams D."/>
            <person name="Bedell J.A."/>
            <person name="Mardis E.R."/>
            <person name="Clifton S.W."/>
            <person name="Chissoe S.L."/>
            <person name="Marra M.A."/>
            <person name="Raymond C."/>
            <person name="Haugen E."/>
            <person name="Gillett W."/>
            <person name="Zhou Y."/>
            <person name="James R."/>
            <person name="Phelps K."/>
            <person name="Iadanoto S."/>
            <person name="Bubb K."/>
            <person name="Simms E."/>
            <person name="Levy R."/>
            <person name="Clendenning J."/>
            <person name="Kaul R."/>
            <person name="Kent W.J."/>
            <person name="Furey T.S."/>
            <person name="Baertsch R.A."/>
            <person name="Brent M.R."/>
            <person name="Keibler E."/>
            <person name="Flicek P."/>
            <person name="Bork P."/>
            <person name="Suyama M."/>
            <person name="Bailey J.A."/>
            <person name="Portnoy M.E."/>
            <person name="Torrents D."/>
            <person name="Chinwalla A.T."/>
            <person name="Gish W.R."/>
            <person name="Eddy S.R."/>
            <person name="McPherson J.D."/>
            <person name="Olson M.V."/>
            <person name="Eichler E.E."/>
            <person name="Green E.D."/>
            <person name="Waterston R.H."/>
            <person name="Wilson R.K."/>
        </authorList>
    </citation>
    <scope>NUCLEOTIDE SEQUENCE [LARGE SCALE GENOMIC DNA]</scope>
</reference>
<proteinExistence type="inferred from homology"/>
<sequence length="265" mass="31441">MGQILGKIMMSHQPQPQEERSPQRSTSGYPLQEVVDDEVSGPSAPGVDPSPPRRSLGWKRKRECLDESDDEPEKELAPEPEETWVAETLCGLKMKAKRRRVSLVLPEYYEAFNRLLEDPVIKRLLAWDKDLRVSDKYLLAMVIAYFSRAGLPSWQYQRIHFFLALYLANDMEEDDEAPKQNIFYFLYEETRSHIPLLSELWFQLCRYMNPRARKNCSQIALFRKYRFHFFCSMRCRAWVSLEELEEIQAYDPEHWVWARDRAHLS</sequence>
<comment type="similarity">
    <text evidence="2">Belongs to the Speedy/Ringo family.</text>
</comment>
<accession>P0DUX0</accession>
<feature type="chain" id="PRO_0000453931" description="Speedy protein E10">
    <location>
        <begin position="1"/>
        <end position="265"/>
    </location>
</feature>
<feature type="region of interest" description="Disordered" evidence="1">
    <location>
        <begin position="1"/>
        <end position="80"/>
    </location>
</feature>
<feature type="compositionally biased region" description="Acidic residues" evidence="1">
    <location>
        <begin position="66"/>
        <end position="80"/>
    </location>
</feature>
<dbReference type="EMBL" id="AC211491">
    <property type="status" value="NOT_ANNOTATED_CDS"/>
    <property type="molecule type" value="Genomic_DNA"/>
</dbReference>
<dbReference type="CCDS" id="CCDS94117.1"/>
<dbReference type="RefSeq" id="NP_001369433.1">
    <property type="nucleotide sequence ID" value="NM_001382504.2"/>
</dbReference>
<dbReference type="RefSeq" id="NP_001369434.1">
    <property type="nucleotide sequence ID" value="NM_001382505.2"/>
</dbReference>
<dbReference type="RefSeq" id="XP_006716273.1">
    <property type="nucleotide sequence ID" value="XM_006716210.3"/>
</dbReference>
<dbReference type="RefSeq" id="XP_006716275.1">
    <property type="nucleotide sequence ID" value="XM_006716212.3"/>
</dbReference>
<dbReference type="RefSeq" id="XP_006726497.1">
    <property type="nucleotide sequence ID" value="XM_006726434.3"/>
</dbReference>
<dbReference type="RefSeq" id="XP_016868377.1">
    <property type="nucleotide sequence ID" value="XM_017012888.1"/>
</dbReference>
<dbReference type="RefSeq" id="XP_016868422.1">
    <property type="nucleotide sequence ID" value="XM_017012933.1"/>
</dbReference>
<dbReference type="RefSeq" id="XP_016885939.1">
    <property type="nucleotide sequence ID" value="XM_017030450.1"/>
</dbReference>
<dbReference type="RefSeq" id="XP_047276663.1">
    <property type="nucleotide sequence ID" value="XM_047420707.1"/>
</dbReference>
<dbReference type="SMR" id="P0DUX0"/>
<dbReference type="Ensembl" id="ENST00000682856.2">
    <property type="protein sequence ID" value="ENSP00000509062.1"/>
    <property type="gene ID" value="ENSG00000274570.6"/>
</dbReference>
<dbReference type="Ensembl" id="ENST00000691996.1">
    <property type="protein sequence ID" value="ENSP00000508934.1"/>
    <property type="gene ID" value="ENSG00000274570.6"/>
</dbReference>
<dbReference type="GeneID" id="643862"/>
<dbReference type="MANE-Select" id="ENST00000691996.1">
    <property type="protein sequence ID" value="ENSP00000508934.1"/>
    <property type="RefSeq nucleotide sequence ID" value="NM_001382505.2"/>
    <property type="RefSeq protein sequence ID" value="NP_001369434.1"/>
</dbReference>
<dbReference type="AGR" id="HGNC:51506"/>
<dbReference type="GeneCards" id="SPDYE10"/>
<dbReference type="HGNC" id="HGNC:51506">
    <property type="gene designation" value="SPDYE10"/>
</dbReference>
<dbReference type="HPA" id="ENSG00000274570">
    <property type="expression patterns" value="Low tissue specificity"/>
</dbReference>
<dbReference type="neXtProt" id="NX_P0DUX0"/>
<dbReference type="GeneTree" id="ENSGT00940000154173"/>
<dbReference type="InParanoid" id="P0DUX0"/>
<dbReference type="OrthoDB" id="9442170at2759"/>
<dbReference type="PRO" id="PR:P0DUX0"/>
<dbReference type="Proteomes" id="UP000005640">
    <property type="component" value="Chromosome 7"/>
</dbReference>
<dbReference type="GO" id="GO:0019901">
    <property type="term" value="F:protein kinase binding"/>
    <property type="evidence" value="ECO:0000318"/>
    <property type="project" value="GO_Central"/>
</dbReference>
<dbReference type="InterPro" id="IPR020984">
    <property type="entry name" value="Speedy"/>
</dbReference>
<dbReference type="PANTHER" id="PTHR31156">
    <property type="entry name" value="WBSCR19-LIKE PROTEIN"/>
    <property type="match status" value="1"/>
</dbReference>
<dbReference type="Pfam" id="PF11357">
    <property type="entry name" value="Spy1"/>
    <property type="match status" value="1"/>
</dbReference>